<reference key="1">
    <citation type="journal article" date="2006" name="BMC Evol. Biol.">
        <title>Complete plastid genome sequences of Drimys, Liriodendron, and Piper: implications for the phylogenetic relationships of magnoliids.</title>
        <authorList>
            <person name="Cai Z."/>
            <person name="Penaflor C."/>
            <person name="Kuehl J.V."/>
            <person name="Leebens-Mack J."/>
            <person name="Carlson J.E."/>
            <person name="dePamphilis C.W."/>
            <person name="Boore J.L."/>
            <person name="Jansen R.K."/>
        </authorList>
    </citation>
    <scope>NUCLEOTIDE SEQUENCE [LARGE SCALE GENOMIC DNA]</scope>
</reference>
<gene>
    <name evidence="1" type="primary">ndhA</name>
</gene>
<comment type="function">
    <text evidence="1">NDH shuttles electrons from NAD(P)H:plastoquinone, via FMN and iron-sulfur (Fe-S) centers, to quinones in the photosynthetic chain and possibly in a chloroplast respiratory chain. The immediate electron acceptor for the enzyme in this species is believed to be plastoquinone. Couples the redox reaction to proton translocation, and thus conserves the redox energy in a proton gradient.</text>
</comment>
<comment type="catalytic activity">
    <reaction evidence="1">
        <text>a plastoquinone + NADH + (n+1) H(+)(in) = a plastoquinol + NAD(+) + n H(+)(out)</text>
        <dbReference type="Rhea" id="RHEA:42608"/>
        <dbReference type="Rhea" id="RHEA-COMP:9561"/>
        <dbReference type="Rhea" id="RHEA-COMP:9562"/>
        <dbReference type="ChEBI" id="CHEBI:15378"/>
        <dbReference type="ChEBI" id="CHEBI:17757"/>
        <dbReference type="ChEBI" id="CHEBI:57540"/>
        <dbReference type="ChEBI" id="CHEBI:57945"/>
        <dbReference type="ChEBI" id="CHEBI:62192"/>
    </reaction>
</comment>
<comment type="catalytic activity">
    <reaction evidence="1">
        <text>a plastoquinone + NADPH + (n+1) H(+)(in) = a plastoquinol + NADP(+) + n H(+)(out)</text>
        <dbReference type="Rhea" id="RHEA:42612"/>
        <dbReference type="Rhea" id="RHEA-COMP:9561"/>
        <dbReference type="Rhea" id="RHEA-COMP:9562"/>
        <dbReference type="ChEBI" id="CHEBI:15378"/>
        <dbReference type="ChEBI" id="CHEBI:17757"/>
        <dbReference type="ChEBI" id="CHEBI:57783"/>
        <dbReference type="ChEBI" id="CHEBI:58349"/>
        <dbReference type="ChEBI" id="CHEBI:62192"/>
    </reaction>
</comment>
<comment type="subunit">
    <text evidence="1">NDH is composed of at least 16 different subunits, 5 of which are encoded in the nucleus.</text>
</comment>
<comment type="subcellular location">
    <subcellularLocation>
        <location evidence="1">Plastid</location>
        <location evidence="1">Chloroplast thylakoid membrane</location>
        <topology evidence="1">Multi-pass membrane protein</topology>
    </subcellularLocation>
</comment>
<comment type="similarity">
    <text evidence="1">Belongs to the complex I subunit 1 family.</text>
</comment>
<feature type="chain" id="PRO_0000275580" description="NAD(P)H-quinone oxidoreductase subunit 1, chloroplastic">
    <location>
        <begin position="1"/>
        <end position="363"/>
    </location>
</feature>
<feature type="transmembrane region" description="Helical" evidence="1">
    <location>
        <begin position="30"/>
        <end position="50"/>
    </location>
</feature>
<feature type="transmembrane region" description="Helical" evidence="1">
    <location>
        <begin position="98"/>
        <end position="118"/>
    </location>
</feature>
<feature type="transmembrane region" description="Helical" evidence="1">
    <location>
        <begin position="127"/>
        <end position="147"/>
    </location>
</feature>
<feature type="transmembrane region" description="Helical" evidence="1">
    <location>
        <begin position="248"/>
        <end position="268"/>
    </location>
</feature>
<feature type="transmembrane region" description="Helical" evidence="1">
    <location>
        <begin position="300"/>
        <end position="320"/>
    </location>
</feature>
<feature type="transmembrane region" description="Helical" evidence="1">
    <location>
        <begin position="336"/>
        <end position="356"/>
    </location>
</feature>
<organism>
    <name type="scientific">Drimys granadensis</name>
    <dbReference type="NCBI Taxonomy" id="224735"/>
    <lineage>
        <taxon>Eukaryota</taxon>
        <taxon>Viridiplantae</taxon>
        <taxon>Streptophyta</taxon>
        <taxon>Embryophyta</taxon>
        <taxon>Tracheophyta</taxon>
        <taxon>Spermatophyta</taxon>
        <taxon>Magnoliopsida</taxon>
        <taxon>Magnoliidae</taxon>
        <taxon>Canellales</taxon>
        <taxon>Winteraceae</taxon>
        <taxon>Drimys</taxon>
    </lineage>
</organism>
<evidence type="ECO:0000255" key="1">
    <source>
        <dbReference type="HAMAP-Rule" id="MF_01350"/>
    </source>
</evidence>
<proteinExistence type="inferred from homology"/>
<geneLocation type="chloroplast"/>
<name>NU1C_DRIGR</name>
<sequence>MIIDTTEVQAINSFSRSESLKEGYGLIGMLVPIFTPVSGITIGVLVIVWLEREISAGIQQRIGPEYAGPLGILQALADGTKLLFKEDLLPSRGDIRLFSIGPSIAVISILLSYSVIPFGYRLVLADLSIGVFLWIAISSIAPIGLLMSGYGSNNKYSFSGGLRAAAQSISYEIPLTPCVLSISLLSNSSSTIDIVEAQSKYGFWGWNLWRQPIGFIVFIISSLAECERLPFDLPEAEEELVAGYQTEYSGIKFGLFYVASYLNLLVSSLFVTVLYLGGWNLSIPYIFIPELFGINKTGGVFGTTIGILITLAKAYLFLFIPITTRWTLPRMRMDQLLNLGWKFLLPISLGNLLLTTSSQLLSL</sequence>
<protein>
    <recommendedName>
        <fullName evidence="1">NAD(P)H-quinone oxidoreductase subunit 1, chloroplastic</fullName>
        <ecNumber evidence="1">7.1.1.-</ecNumber>
    </recommendedName>
    <alternativeName>
        <fullName evidence="1">NAD(P)H dehydrogenase subunit 1</fullName>
        <shortName evidence="1">NDH subunit 1</shortName>
    </alternativeName>
    <alternativeName>
        <fullName evidence="1">NADH-plastoquinone oxidoreductase subunit 1</fullName>
    </alternativeName>
</protein>
<accession>Q06GU1</accession>
<keyword id="KW-0150">Chloroplast</keyword>
<keyword id="KW-0472">Membrane</keyword>
<keyword id="KW-0520">NAD</keyword>
<keyword id="KW-0521">NADP</keyword>
<keyword id="KW-0934">Plastid</keyword>
<keyword id="KW-0618">Plastoquinone</keyword>
<keyword id="KW-0874">Quinone</keyword>
<keyword id="KW-0793">Thylakoid</keyword>
<keyword id="KW-1278">Translocase</keyword>
<keyword id="KW-0812">Transmembrane</keyword>
<keyword id="KW-1133">Transmembrane helix</keyword>
<dbReference type="EC" id="7.1.1.-" evidence="1"/>
<dbReference type="EMBL" id="DQ887676">
    <property type="protein sequence ID" value="ABH88353.1"/>
    <property type="molecule type" value="Genomic_DNA"/>
</dbReference>
<dbReference type="RefSeq" id="YP_784442.1">
    <property type="nucleotide sequence ID" value="NC_008456.1"/>
</dbReference>
<dbReference type="SMR" id="Q06GU1"/>
<dbReference type="GeneID" id="4363563"/>
<dbReference type="GO" id="GO:0009535">
    <property type="term" value="C:chloroplast thylakoid membrane"/>
    <property type="evidence" value="ECO:0007669"/>
    <property type="project" value="UniProtKB-SubCell"/>
</dbReference>
<dbReference type="GO" id="GO:0003954">
    <property type="term" value="F:NADH dehydrogenase activity"/>
    <property type="evidence" value="ECO:0007669"/>
    <property type="project" value="TreeGrafter"/>
</dbReference>
<dbReference type="GO" id="GO:0016655">
    <property type="term" value="F:oxidoreductase activity, acting on NAD(P)H, quinone or similar compound as acceptor"/>
    <property type="evidence" value="ECO:0007669"/>
    <property type="project" value="UniProtKB-UniRule"/>
</dbReference>
<dbReference type="GO" id="GO:0048038">
    <property type="term" value="F:quinone binding"/>
    <property type="evidence" value="ECO:0007669"/>
    <property type="project" value="UniProtKB-KW"/>
</dbReference>
<dbReference type="GO" id="GO:0009060">
    <property type="term" value="P:aerobic respiration"/>
    <property type="evidence" value="ECO:0007669"/>
    <property type="project" value="TreeGrafter"/>
</dbReference>
<dbReference type="GO" id="GO:0019684">
    <property type="term" value="P:photosynthesis, light reaction"/>
    <property type="evidence" value="ECO:0007669"/>
    <property type="project" value="UniProtKB-UniRule"/>
</dbReference>
<dbReference type="HAMAP" id="MF_01350">
    <property type="entry name" value="NDH1_NuoH"/>
    <property type="match status" value="1"/>
</dbReference>
<dbReference type="InterPro" id="IPR001694">
    <property type="entry name" value="NADH_UbQ_OxRdtase_su1/FPO"/>
</dbReference>
<dbReference type="InterPro" id="IPR018086">
    <property type="entry name" value="NADH_UbQ_OxRdtase_su1_CS"/>
</dbReference>
<dbReference type="NCBIfam" id="NF004741">
    <property type="entry name" value="PRK06076.1-2"/>
    <property type="match status" value="1"/>
</dbReference>
<dbReference type="PANTHER" id="PTHR11432">
    <property type="entry name" value="NADH DEHYDROGENASE SUBUNIT 1"/>
    <property type="match status" value="1"/>
</dbReference>
<dbReference type="PANTHER" id="PTHR11432:SF3">
    <property type="entry name" value="NADH-UBIQUINONE OXIDOREDUCTASE CHAIN 1"/>
    <property type="match status" value="1"/>
</dbReference>
<dbReference type="Pfam" id="PF00146">
    <property type="entry name" value="NADHdh"/>
    <property type="match status" value="1"/>
</dbReference>
<dbReference type="PROSITE" id="PS00667">
    <property type="entry name" value="COMPLEX1_ND1_1"/>
    <property type="match status" value="1"/>
</dbReference>
<dbReference type="PROSITE" id="PS00668">
    <property type="entry name" value="COMPLEX1_ND1_2"/>
    <property type="match status" value="1"/>
</dbReference>